<name>FRDD_HAEIN</name>
<gene>
    <name evidence="1" type="primary">frdD</name>
    <name type="ordered locus">HI_0832</name>
</gene>
<organism>
    <name type="scientific">Haemophilus influenzae (strain ATCC 51907 / DSM 11121 / KW20 / Rd)</name>
    <dbReference type="NCBI Taxonomy" id="71421"/>
    <lineage>
        <taxon>Bacteria</taxon>
        <taxon>Pseudomonadati</taxon>
        <taxon>Pseudomonadota</taxon>
        <taxon>Gammaproteobacteria</taxon>
        <taxon>Pasteurellales</taxon>
        <taxon>Pasteurellaceae</taxon>
        <taxon>Haemophilus</taxon>
    </lineage>
</organism>
<evidence type="ECO:0000255" key="1">
    <source>
        <dbReference type="HAMAP-Rule" id="MF_00709"/>
    </source>
</evidence>
<proteinExistence type="inferred from homology"/>
<comment type="function">
    <text evidence="1">Anchors the catalytic components of the fumarate reductase complex to the cell membrane, binds quinones.</text>
</comment>
<comment type="subunit">
    <text evidence="1">Part of an enzyme complex containing four subunits: a flavoprotein (FrdA), an iron-sulfur protein (FrdB), and two hydrophobic anchor proteins (FrdC and FrdD).</text>
</comment>
<comment type="subcellular location">
    <subcellularLocation>
        <location evidence="1">Cell inner membrane</location>
        <topology evidence="1">Multi-pass membrane protein</topology>
    </subcellularLocation>
</comment>
<comment type="similarity">
    <text evidence="1">Belongs to the FrdD family.</text>
</comment>
<sequence>MVDQNPKRSGEPPVWLMFGAGGTVSAIFLPVVILIIGLLLPFGLVDVHNLITFAYSWIGKLVILVLTIFPMWCGLHRIHHGMHDLKVHVPAGGFIFYGLATIYTVWVLFAVINL</sequence>
<reference key="1">
    <citation type="journal article" date="1995" name="Science">
        <title>Whole-genome random sequencing and assembly of Haemophilus influenzae Rd.</title>
        <authorList>
            <person name="Fleischmann R.D."/>
            <person name="Adams M.D."/>
            <person name="White O."/>
            <person name="Clayton R.A."/>
            <person name="Kirkness E.F."/>
            <person name="Kerlavage A.R."/>
            <person name="Bult C.J."/>
            <person name="Tomb J.-F."/>
            <person name="Dougherty B.A."/>
            <person name="Merrick J.M."/>
            <person name="McKenney K."/>
            <person name="Sutton G.G."/>
            <person name="FitzHugh W."/>
            <person name="Fields C.A."/>
            <person name="Gocayne J.D."/>
            <person name="Scott J.D."/>
            <person name="Shirley R."/>
            <person name="Liu L.-I."/>
            <person name="Glodek A."/>
            <person name="Kelley J.M."/>
            <person name="Weidman J.F."/>
            <person name="Phillips C.A."/>
            <person name="Spriggs T."/>
            <person name="Hedblom E."/>
            <person name="Cotton M.D."/>
            <person name="Utterback T.R."/>
            <person name="Hanna M.C."/>
            <person name="Nguyen D.T."/>
            <person name="Saudek D.M."/>
            <person name="Brandon R.C."/>
            <person name="Fine L.D."/>
            <person name="Fritchman J.L."/>
            <person name="Fuhrmann J.L."/>
            <person name="Geoghagen N.S.M."/>
            <person name="Gnehm C.L."/>
            <person name="McDonald L.A."/>
            <person name="Small K.V."/>
            <person name="Fraser C.M."/>
            <person name="Smith H.O."/>
            <person name="Venter J.C."/>
        </authorList>
    </citation>
    <scope>NUCLEOTIDE SEQUENCE [LARGE SCALE GENOMIC DNA]</scope>
    <source>
        <strain>ATCC 51907 / DSM 11121 / KW20 / Rd</strain>
    </source>
</reference>
<accession>P44891</accession>
<keyword id="KW-0997">Cell inner membrane</keyword>
<keyword id="KW-1003">Cell membrane</keyword>
<keyword id="KW-0472">Membrane</keyword>
<keyword id="KW-1185">Reference proteome</keyword>
<keyword id="KW-0812">Transmembrane</keyword>
<keyword id="KW-1133">Transmembrane helix</keyword>
<dbReference type="EMBL" id="L42023">
    <property type="protein sequence ID" value="AAC22490.1"/>
    <property type="molecule type" value="Genomic_DNA"/>
</dbReference>
<dbReference type="PIR" id="E64097">
    <property type="entry name" value="E64097"/>
</dbReference>
<dbReference type="RefSeq" id="NP_438992.1">
    <property type="nucleotide sequence ID" value="NC_000907.1"/>
</dbReference>
<dbReference type="SMR" id="P44891"/>
<dbReference type="STRING" id="71421.HI_0832"/>
<dbReference type="EnsemblBacteria" id="AAC22490">
    <property type="protein sequence ID" value="AAC22490"/>
    <property type="gene ID" value="HI_0832"/>
</dbReference>
<dbReference type="KEGG" id="hin:HI_0832"/>
<dbReference type="PATRIC" id="fig|71421.8.peg.873"/>
<dbReference type="eggNOG" id="COG3080">
    <property type="taxonomic scope" value="Bacteria"/>
</dbReference>
<dbReference type="HOGENOM" id="CLU_168367_0_0_6"/>
<dbReference type="OrthoDB" id="9804636at2"/>
<dbReference type="PhylomeDB" id="P44891"/>
<dbReference type="BioCyc" id="HINF71421:G1GJ1-873-MONOMER"/>
<dbReference type="Proteomes" id="UP000000579">
    <property type="component" value="Chromosome"/>
</dbReference>
<dbReference type="GO" id="GO:0045283">
    <property type="term" value="C:fumarate reductase complex"/>
    <property type="evidence" value="ECO:0007669"/>
    <property type="project" value="UniProtKB-UniRule"/>
</dbReference>
<dbReference type="GO" id="GO:0005886">
    <property type="term" value="C:plasma membrane"/>
    <property type="evidence" value="ECO:0007669"/>
    <property type="project" value="UniProtKB-SubCell"/>
</dbReference>
<dbReference type="GO" id="GO:0000104">
    <property type="term" value="F:succinate dehydrogenase activity"/>
    <property type="evidence" value="ECO:0007669"/>
    <property type="project" value="UniProtKB-UniRule"/>
</dbReference>
<dbReference type="GO" id="GO:0006106">
    <property type="term" value="P:fumarate metabolic process"/>
    <property type="evidence" value="ECO:0007669"/>
    <property type="project" value="InterPro"/>
</dbReference>
<dbReference type="CDD" id="cd00547">
    <property type="entry name" value="QFR_TypeD_subunitD"/>
    <property type="match status" value="1"/>
</dbReference>
<dbReference type="Gene3D" id="1.20.1300.10">
    <property type="entry name" value="Fumarate reductase/succinate dehydrogenase, transmembrane subunit"/>
    <property type="match status" value="1"/>
</dbReference>
<dbReference type="HAMAP" id="MF_00709">
    <property type="entry name" value="Fumarate_red_D"/>
    <property type="match status" value="1"/>
</dbReference>
<dbReference type="InterPro" id="IPR003418">
    <property type="entry name" value="Fumarate_red_D"/>
</dbReference>
<dbReference type="InterPro" id="IPR034804">
    <property type="entry name" value="SQR/QFR_C/D"/>
</dbReference>
<dbReference type="NCBIfam" id="NF003977">
    <property type="entry name" value="PRK05470.1-1"/>
    <property type="match status" value="1"/>
</dbReference>
<dbReference type="Pfam" id="PF02313">
    <property type="entry name" value="Fumarate_red_D"/>
    <property type="match status" value="1"/>
</dbReference>
<dbReference type="PIRSF" id="PIRSF000179">
    <property type="entry name" value="FrdD"/>
    <property type="match status" value="1"/>
</dbReference>
<dbReference type="SUPFAM" id="SSF81343">
    <property type="entry name" value="Fumarate reductase respiratory complex transmembrane subunits"/>
    <property type="match status" value="1"/>
</dbReference>
<feature type="chain" id="PRO_0000196546" description="Fumarate reductase subunit D">
    <location>
        <begin position="1"/>
        <end position="114"/>
    </location>
</feature>
<feature type="transmembrane region" description="Helical" evidence="1">
    <location>
        <begin position="24"/>
        <end position="44"/>
    </location>
</feature>
<feature type="transmembrane region" description="Helical" evidence="1">
    <location>
        <begin position="50"/>
        <end position="70"/>
    </location>
</feature>
<feature type="transmembrane region" description="Helical" evidence="1">
    <location>
        <begin position="92"/>
        <end position="112"/>
    </location>
</feature>
<protein>
    <recommendedName>
        <fullName evidence="1">Fumarate reductase subunit D</fullName>
    </recommendedName>
    <alternativeName>
        <fullName evidence="1">Quinol-fumarate reductase subunit D</fullName>
        <shortName evidence="1">QFR subunit D</shortName>
    </alternativeName>
</protein>